<proteinExistence type="inferred from homology"/>
<feature type="chain" id="PRO_0000338917" description="Translation initiation factor IF-1">
    <location>
        <begin position="1"/>
        <end position="72"/>
    </location>
</feature>
<feature type="domain" description="S1-like" evidence="1">
    <location>
        <begin position="1"/>
        <end position="72"/>
    </location>
</feature>
<sequence length="72" mass="8273">MAKEDNIEMQGTILETLPNTMFRVELENGHVVIAHISGKMRKNYIRILTGDKVTVQLTPYDLTKGRIVFRAR</sequence>
<protein>
    <recommendedName>
        <fullName evidence="1">Translation initiation factor IF-1</fullName>
    </recommendedName>
</protein>
<gene>
    <name evidence="1" type="primary">infA</name>
    <name type="ordered locus">Shew185_2464</name>
</gene>
<comment type="function">
    <text evidence="1">One of the essential components for the initiation of protein synthesis. Stabilizes the binding of IF-2 and IF-3 on the 30S subunit to which N-formylmethionyl-tRNA(fMet) subsequently binds. Helps modulate mRNA selection, yielding the 30S pre-initiation complex (PIC). Upon addition of the 50S ribosomal subunit IF-1, IF-2 and IF-3 are released leaving the mature 70S translation initiation complex.</text>
</comment>
<comment type="subunit">
    <text evidence="1">Component of the 30S ribosomal translation pre-initiation complex which assembles on the 30S ribosome in the order IF-2 and IF-3, IF-1 and N-formylmethionyl-tRNA(fMet); mRNA recruitment can occur at any time during PIC assembly.</text>
</comment>
<comment type="subcellular location">
    <subcellularLocation>
        <location evidence="1">Cytoplasm</location>
    </subcellularLocation>
</comment>
<comment type="similarity">
    <text evidence="1">Belongs to the IF-1 family.</text>
</comment>
<reference key="1">
    <citation type="submission" date="2007-07" db="EMBL/GenBank/DDBJ databases">
        <title>Complete sequence of chromosome of Shewanella baltica OS185.</title>
        <authorList>
            <consortium name="US DOE Joint Genome Institute"/>
            <person name="Copeland A."/>
            <person name="Lucas S."/>
            <person name="Lapidus A."/>
            <person name="Barry K."/>
            <person name="Glavina del Rio T."/>
            <person name="Dalin E."/>
            <person name="Tice H."/>
            <person name="Pitluck S."/>
            <person name="Sims D."/>
            <person name="Brettin T."/>
            <person name="Bruce D."/>
            <person name="Detter J.C."/>
            <person name="Han C."/>
            <person name="Schmutz J."/>
            <person name="Larimer F."/>
            <person name="Land M."/>
            <person name="Hauser L."/>
            <person name="Kyrpides N."/>
            <person name="Mikhailova N."/>
            <person name="Brettar I."/>
            <person name="Rodrigues J."/>
            <person name="Konstantinidis K."/>
            <person name="Tiedje J."/>
            <person name="Richardson P."/>
        </authorList>
    </citation>
    <scope>NUCLEOTIDE SEQUENCE [LARGE SCALE GENOMIC DNA]</scope>
    <source>
        <strain>OS185</strain>
    </source>
</reference>
<organism>
    <name type="scientific">Shewanella baltica (strain OS185)</name>
    <dbReference type="NCBI Taxonomy" id="402882"/>
    <lineage>
        <taxon>Bacteria</taxon>
        <taxon>Pseudomonadati</taxon>
        <taxon>Pseudomonadota</taxon>
        <taxon>Gammaproteobacteria</taxon>
        <taxon>Alteromonadales</taxon>
        <taxon>Shewanellaceae</taxon>
        <taxon>Shewanella</taxon>
    </lineage>
</organism>
<accession>A6WP62</accession>
<evidence type="ECO:0000255" key="1">
    <source>
        <dbReference type="HAMAP-Rule" id="MF_00075"/>
    </source>
</evidence>
<dbReference type="EMBL" id="CP000753">
    <property type="protein sequence ID" value="ABS08601.1"/>
    <property type="molecule type" value="Genomic_DNA"/>
</dbReference>
<dbReference type="RefSeq" id="WP_006081934.1">
    <property type="nucleotide sequence ID" value="NC_009665.1"/>
</dbReference>
<dbReference type="SMR" id="A6WP62"/>
<dbReference type="GeneID" id="94727745"/>
<dbReference type="KEGG" id="sbm:Shew185_2464"/>
<dbReference type="HOGENOM" id="CLU_151267_1_0_6"/>
<dbReference type="GO" id="GO:0005829">
    <property type="term" value="C:cytosol"/>
    <property type="evidence" value="ECO:0007669"/>
    <property type="project" value="TreeGrafter"/>
</dbReference>
<dbReference type="GO" id="GO:0043022">
    <property type="term" value="F:ribosome binding"/>
    <property type="evidence" value="ECO:0007669"/>
    <property type="project" value="UniProtKB-UniRule"/>
</dbReference>
<dbReference type="GO" id="GO:0019843">
    <property type="term" value="F:rRNA binding"/>
    <property type="evidence" value="ECO:0007669"/>
    <property type="project" value="UniProtKB-UniRule"/>
</dbReference>
<dbReference type="GO" id="GO:0003743">
    <property type="term" value="F:translation initiation factor activity"/>
    <property type="evidence" value="ECO:0007669"/>
    <property type="project" value="UniProtKB-UniRule"/>
</dbReference>
<dbReference type="CDD" id="cd04451">
    <property type="entry name" value="S1_IF1"/>
    <property type="match status" value="1"/>
</dbReference>
<dbReference type="FunFam" id="2.40.50.140:FF:000002">
    <property type="entry name" value="Translation initiation factor IF-1"/>
    <property type="match status" value="1"/>
</dbReference>
<dbReference type="Gene3D" id="2.40.50.140">
    <property type="entry name" value="Nucleic acid-binding proteins"/>
    <property type="match status" value="1"/>
</dbReference>
<dbReference type="HAMAP" id="MF_00075">
    <property type="entry name" value="IF_1"/>
    <property type="match status" value="1"/>
</dbReference>
<dbReference type="InterPro" id="IPR012340">
    <property type="entry name" value="NA-bd_OB-fold"/>
</dbReference>
<dbReference type="InterPro" id="IPR006196">
    <property type="entry name" value="RNA-binding_domain_S1_IF1"/>
</dbReference>
<dbReference type="InterPro" id="IPR003029">
    <property type="entry name" value="S1_domain"/>
</dbReference>
<dbReference type="InterPro" id="IPR004368">
    <property type="entry name" value="TIF_IF1"/>
</dbReference>
<dbReference type="NCBIfam" id="TIGR00008">
    <property type="entry name" value="infA"/>
    <property type="match status" value="1"/>
</dbReference>
<dbReference type="PANTHER" id="PTHR33370">
    <property type="entry name" value="TRANSLATION INITIATION FACTOR IF-1, CHLOROPLASTIC"/>
    <property type="match status" value="1"/>
</dbReference>
<dbReference type="PANTHER" id="PTHR33370:SF1">
    <property type="entry name" value="TRANSLATION INITIATION FACTOR IF-1, CHLOROPLASTIC"/>
    <property type="match status" value="1"/>
</dbReference>
<dbReference type="Pfam" id="PF01176">
    <property type="entry name" value="eIF-1a"/>
    <property type="match status" value="1"/>
</dbReference>
<dbReference type="SMART" id="SM00316">
    <property type="entry name" value="S1"/>
    <property type="match status" value="1"/>
</dbReference>
<dbReference type="SUPFAM" id="SSF50249">
    <property type="entry name" value="Nucleic acid-binding proteins"/>
    <property type="match status" value="1"/>
</dbReference>
<dbReference type="PROSITE" id="PS50832">
    <property type="entry name" value="S1_IF1_TYPE"/>
    <property type="match status" value="1"/>
</dbReference>
<keyword id="KW-0963">Cytoplasm</keyword>
<keyword id="KW-0396">Initiation factor</keyword>
<keyword id="KW-0648">Protein biosynthesis</keyword>
<keyword id="KW-0694">RNA-binding</keyword>
<keyword id="KW-0699">rRNA-binding</keyword>
<name>IF1_SHEB8</name>